<accession>Q98NW7</accession>
<feature type="chain" id="PRO_0000173938" description="DNA polymerase IV 3">
    <location>
        <begin position="1"/>
        <end position="361"/>
    </location>
</feature>
<feature type="domain" description="UmuC">
    <location>
        <begin position="12"/>
        <end position="192"/>
    </location>
</feature>
<feature type="active site" evidence="1">
    <location>
        <position position="111"/>
    </location>
</feature>
<feature type="binding site" evidence="1">
    <location>
        <position position="16"/>
    </location>
    <ligand>
        <name>Mg(2+)</name>
        <dbReference type="ChEBI" id="CHEBI:18420"/>
    </ligand>
</feature>
<feature type="binding site" evidence="1">
    <location>
        <position position="110"/>
    </location>
    <ligand>
        <name>Mg(2+)</name>
        <dbReference type="ChEBI" id="CHEBI:18420"/>
    </ligand>
</feature>
<feature type="site" description="Substrate discrimination" evidence="1">
    <location>
        <position position="21"/>
    </location>
</feature>
<geneLocation type="plasmid">
    <name>pMLb</name>
</geneLocation>
<sequence length="361" mass="39531">MVPERGADPRKIIHVDMDAFYASVEQRDNPELRGKPLAVGGAAARGVVAAASYEARAFGVRSAMPSVTAKRKCPELIFVPPRFDVYRAVSAQIRDVFAEHTDLIEPLSLDEAYLDVTQNRLNISSATTIAEMIRAKILEVTGLTASAGISYNKFLAKMASDQNKPNGQFVITPRHGPAFVETLPVNKFHGVGPATAAKMEALGIETGADLKERSLSFLQQHFGKSGLWYYQIARAIDERAVDPDRPRKSIGAEDTFAADIVDLETSLAELKPLVAKVWGYCEGKGIRGRTVTLKIKFADFQQITRSRTVAVPIELSDFEHLAADLLGSVFPVRKGIRLLGVTLSSLGDVLPPDQRQLRFEL</sequence>
<comment type="function">
    <text evidence="1">Poorly processive, error-prone DNA polymerase involved in untargeted mutagenesis. Copies undamaged DNA at stalled replication forks, which arise in vivo from mismatched or misaligned primer ends. These misaligned primers can be extended by PolIV. Exhibits no 3'-5' exonuclease (proofreading) activity. May be involved in translesional synthesis, in conjunction with the beta clamp from PolIII (By similarity).</text>
</comment>
<comment type="catalytic activity">
    <reaction>
        <text>DNA(n) + a 2'-deoxyribonucleoside 5'-triphosphate = DNA(n+1) + diphosphate</text>
        <dbReference type="Rhea" id="RHEA:22508"/>
        <dbReference type="Rhea" id="RHEA-COMP:17339"/>
        <dbReference type="Rhea" id="RHEA-COMP:17340"/>
        <dbReference type="ChEBI" id="CHEBI:33019"/>
        <dbReference type="ChEBI" id="CHEBI:61560"/>
        <dbReference type="ChEBI" id="CHEBI:173112"/>
        <dbReference type="EC" id="2.7.7.7"/>
    </reaction>
</comment>
<comment type="cofactor">
    <cofactor evidence="1">
        <name>Mg(2+)</name>
        <dbReference type="ChEBI" id="CHEBI:18420"/>
    </cofactor>
    <text evidence="1">Binds 2 magnesium ions per subunit.</text>
</comment>
<comment type="subunit">
    <text evidence="1">Monomer.</text>
</comment>
<comment type="subcellular location">
    <subcellularLocation>
        <location evidence="1">Cytoplasm</location>
    </subcellularLocation>
</comment>
<comment type="similarity">
    <text evidence="2">Belongs to the DNA polymerase type-Y family.</text>
</comment>
<evidence type="ECO:0000250" key="1"/>
<evidence type="ECO:0000305" key="2"/>
<name>DPO43_RHILO</name>
<keyword id="KW-0963">Cytoplasm</keyword>
<keyword id="KW-0227">DNA damage</keyword>
<keyword id="KW-0234">DNA repair</keyword>
<keyword id="KW-0235">DNA replication</keyword>
<keyword id="KW-0238">DNA-binding</keyword>
<keyword id="KW-0239">DNA-directed DNA polymerase</keyword>
<keyword id="KW-0460">Magnesium</keyword>
<keyword id="KW-0479">Metal-binding</keyword>
<keyword id="KW-0515">Mutator protein</keyword>
<keyword id="KW-0548">Nucleotidyltransferase</keyword>
<keyword id="KW-0614">Plasmid</keyword>
<keyword id="KW-0808">Transferase</keyword>
<reference key="1">
    <citation type="journal article" date="2000" name="DNA Res.">
        <title>Complete genome structure of the nitrogen-fixing symbiotic bacterium Mesorhizobium loti.</title>
        <authorList>
            <person name="Kaneko T."/>
            <person name="Nakamura Y."/>
            <person name="Sato S."/>
            <person name="Asamizu E."/>
            <person name="Kato T."/>
            <person name="Sasamoto S."/>
            <person name="Watanabe A."/>
            <person name="Idesawa K."/>
            <person name="Ishikawa A."/>
            <person name="Kawashima K."/>
            <person name="Kimura T."/>
            <person name="Kishida Y."/>
            <person name="Kiyokawa C."/>
            <person name="Kohara M."/>
            <person name="Matsumoto M."/>
            <person name="Matsuno A."/>
            <person name="Mochizuki Y."/>
            <person name="Nakayama S."/>
            <person name="Nakazaki N."/>
            <person name="Shimpo S."/>
            <person name="Sugimoto M."/>
            <person name="Takeuchi C."/>
            <person name="Yamada M."/>
            <person name="Tabata S."/>
        </authorList>
    </citation>
    <scope>NUCLEOTIDE SEQUENCE [LARGE SCALE GENOMIC DNA]</scope>
    <source>
        <strain>LMG 29417 / CECT 9101 / MAFF 303099</strain>
    </source>
</reference>
<gene>
    <name type="primary">dinB3</name>
    <name type="ordered locus">mll9709</name>
</gene>
<dbReference type="EC" id="2.7.7.7"/>
<dbReference type="EMBL" id="AP003017">
    <property type="protein sequence ID" value="BAB54888.1"/>
    <property type="molecule type" value="Genomic_DNA"/>
</dbReference>
<dbReference type="RefSeq" id="WP_010916088.1">
    <property type="nucleotide sequence ID" value="NC_002682.1"/>
</dbReference>
<dbReference type="SMR" id="Q98NW7"/>
<dbReference type="KEGG" id="mlo:mll9709"/>
<dbReference type="eggNOG" id="COG0389">
    <property type="taxonomic scope" value="Bacteria"/>
</dbReference>
<dbReference type="HOGENOM" id="CLU_012348_1_2_5"/>
<dbReference type="Proteomes" id="UP000000552">
    <property type="component" value="Plasmid pMLb"/>
</dbReference>
<dbReference type="GO" id="GO:0005829">
    <property type="term" value="C:cytosol"/>
    <property type="evidence" value="ECO:0007669"/>
    <property type="project" value="TreeGrafter"/>
</dbReference>
<dbReference type="GO" id="GO:0003684">
    <property type="term" value="F:damaged DNA binding"/>
    <property type="evidence" value="ECO:0007669"/>
    <property type="project" value="InterPro"/>
</dbReference>
<dbReference type="GO" id="GO:0003887">
    <property type="term" value="F:DNA-directed DNA polymerase activity"/>
    <property type="evidence" value="ECO:0007669"/>
    <property type="project" value="UniProtKB-UniRule"/>
</dbReference>
<dbReference type="GO" id="GO:0000287">
    <property type="term" value="F:magnesium ion binding"/>
    <property type="evidence" value="ECO:0007669"/>
    <property type="project" value="UniProtKB-UniRule"/>
</dbReference>
<dbReference type="GO" id="GO:0006261">
    <property type="term" value="P:DNA-templated DNA replication"/>
    <property type="evidence" value="ECO:0007669"/>
    <property type="project" value="UniProtKB-UniRule"/>
</dbReference>
<dbReference type="GO" id="GO:0042276">
    <property type="term" value="P:error-prone translesion synthesis"/>
    <property type="evidence" value="ECO:0007669"/>
    <property type="project" value="TreeGrafter"/>
</dbReference>
<dbReference type="GO" id="GO:0009432">
    <property type="term" value="P:SOS response"/>
    <property type="evidence" value="ECO:0007669"/>
    <property type="project" value="TreeGrafter"/>
</dbReference>
<dbReference type="CDD" id="cd03586">
    <property type="entry name" value="PolY_Pol_IV_kappa"/>
    <property type="match status" value="1"/>
</dbReference>
<dbReference type="FunFam" id="1.10.150.20:FF:000019">
    <property type="entry name" value="DNA polymerase IV"/>
    <property type="match status" value="1"/>
</dbReference>
<dbReference type="FunFam" id="3.30.1490.100:FF:000004">
    <property type="entry name" value="DNA polymerase IV"/>
    <property type="match status" value="1"/>
</dbReference>
<dbReference type="FunFam" id="3.40.1170.60:FF:000001">
    <property type="entry name" value="DNA polymerase IV"/>
    <property type="match status" value="1"/>
</dbReference>
<dbReference type="Gene3D" id="3.30.70.270">
    <property type="match status" value="1"/>
</dbReference>
<dbReference type="Gene3D" id="3.40.1170.60">
    <property type="match status" value="1"/>
</dbReference>
<dbReference type="Gene3D" id="1.10.150.20">
    <property type="entry name" value="5' to 3' exonuclease, C-terminal subdomain"/>
    <property type="match status" value="1"/>
</dbReference>
<dbReference type="Gene3D" id="3.30.1490.100">
    <property type="entry name" value="DNA polymerase, Y-family, little finger domain"/>
    <property type="match status" value="1"/>
</dbReference>
<dbReference type="HAMAP" id="MF_01113">
    <property type="entry name" value="DNApol_IV"/>
    <property type="match status" value="1"/>
</dbReference>
<dbReference type="InterPro" id="IPR043502">
    <property type="entry name" value="DNA/RNA_pol_sf"/>
</dbReference>
<dbReference type="InterPro" id="IPR036775">
    <property type="entry name" value="DNA_pol_Y-fam_lit_finger_sf"/>
</dbReference>
<dbReference type="InterPro" id="IPR017961">
    <property type="entry name" value="DNA_pol_Y-fam_little_finger"/>
</dbReference>
<dbReference type="InterPro" id="IPR050116">
    <property type="entry name" value="DNA_polymerase-Y"/>
</dbReference>
<dbReference type="InterPro" id="IPR022880">
    <property type="entry name" value="DNApol_IV"/>
</dbReference>
<dbReference type="InterPro" id="IPR024728">
    <property type="entry name" value="PolY_HhH_motif"/>
</dbReference>
<dbReference type="InterPro" id="IPR043128">
    <property type="entry name" value="Rev_trsase/Diguanyl_cyclase"/>
</dbReference>
<dbReference type="InterPro" id="IPR001126">
    <property type="entry name" value="UmuC"/>
</dbReference>
<dbReference type="NCBIfam" id="NF002677">
    <property type="entry name" value="PRK02406.1"/>
    <property type="match status" value="1"/>
</dbReference>
<dbReference type="PANTHER" id="PTHR11076:SF33">
    <property type="entry name" value="DNA POLYMERASE KAPPA"/>
    <property type="match status" value="1"/>
</dbReference>
<dbReference type="PANTHER" id="PTHR11076">
    <property type="entry name" value="DNA REPAIR POLYMERASE UMUC / TRANSFERASE FAMILY MEMBER"/>
    <property type="match status" value="1"/>
</dbReference>
<dbReference type="Pfam" id="PF00817">
    <property type="entry name" value="IMS"/>
    <property type="match status" value="1"/>
</dbReference>
<dbReference type="Pfam" id="PF11799">
    <property type="entry name" value="IMS_C"/>
    <property type="match status" value="1"/>
</dbReference>
<dbReference type="Pfam" id="PF11798">
    <property type="entry name" value="IMS_HHH"/>
    <property type="match status" value="1"/>
</dbReference>
<dbReference type="SUPFAM" id="SSF56672">
    <property type="entry name" value="DNA/RNA polymerases"/>
    <property type="match status" value="1"/>
</dbReference>
<dbReference type="SUPFAM" id="SSF100879">
    <property type="entry name" value="Lesion bypass DNA polymerase (Y-family), little finger domain"/>
    <property type="match status" value="1"/>
</dbReference>
<dbReference type="PROSITE" id="PS50173">
    <property type="entry name" value="UMUC"/>
    <property type="match status" value="1"/>
</dbReference>
<protein>
    <recommendedName>
        <fullName>DNA polymerase IV 3</fullName>
        <shortName>Pol IV 3</shortName>
        <ecNumber>2.7.7.7</ecNumber>
    </recommendedName>
</protein>
<proteinExistence type="inferred from homology"/>
<organism>
    <name type="scientific">Mesorhizobium japonicum (strain LMG 29417 / CECT 9101 / MAFF 303099)</name>
    <name type="common">Mesorhizobium loti (strain MAFF 303099)</name>
    <dbReference type="NCBI Taxonomy" id="266835"/>
    <lineage>
        <taxon>Bacteria</taxon>
        <taxon>Pseudomonadati</taxon>
        <taxon>Pseudomonadota</taxon>
        <taxon>Alphaproteobacteria</taxon>
        <taxon>Hyphomicrobiales</taxon>
        <taxon>Phyllobacteriaceae</taxon>
        <taxon>Mesorhizobium</taxon>
    </lineage>
</organism>